<gene>
    <name evidence="1" type="primary">trmH</name>
    <name type="synonym">spoU</name>
    <name type="ordered locus">SF3691</name>
    <name type="ordered locus">S4078</name>
</gene>
<dbReference type="EC" id="2.1.1.34" evidence="1"/>
<dbReference type="EMBL" id="AE005674">
    <property type="protein sequence ID" value="AAN45138.1"/>
    <property type="molecule type" value="Genomic_DNA"/>
</dbReference>
<dbReference type="EMBL" id="AE014073">
    <property type="protein sequence ID" value="AAP19055.1"/>
    <property type="molecule type" value="Genomic_DNA"/>
</dbReference>
<dbReference type="RefSeq" id="NP_709431.1">
    <property type="nucleotide sequence ID" value="NC_004337.2"/>
</dbReference>
<dbReference type="RefSeq" id="WP_001070177.1">
    <property type="nucleotide sequence ID" value="NZ_WPGW01000042.1"/>
</dbReference>
<dbReference type="SMR" id="P0AGJ4"/>
<dbReference type="STRING" id="198214.SF3691"/>
<dbReference type="PaxDb" id="198214-SF3691"/>
<dbReference type="GeneID" id="1026190"/>
<dbReference type="GeneID" id="93778366"/>
<dbReference type="KEGG" id="sfl:SF3691"/>
<dbReference type="KEGG" id="sfx:S4078"/>
<dbReference type="PATRIC" id="fig|198214.7.peg.4355"/>
<dbReference type="HOGENOM" id="CLU_021322_4_2_6"/>
<dbReference type="Proteomes" id="UP000001006">
    <property type="component" value="Chromosome"/>
</dbReference>
<dbReference type="Proteomes" id="UP000002673">
    <property type="component" value="Chromosome"/>
</dbReference>
<dbReference type="GO" id="GO:0141100">
    <property type="term" value="F:tRNA (guanine(18)-2'-O)-methyltransferase activity"/>
    <property type="evidence" value="ECO:0007669"/>
    <property type="project" value="UniProtKB-UniRule"/>
</dbReference>
<dbReference type="GO" id="GO:0000049">
    <property type="term" value="F:tRNA binding"/>
    <property type="evidence" value="ECO:0007669"/>
    <property type="project" value="UniProtKB-UniRule"/>
</dbReference>
<dbReference type="GO" id="GO:0002938">
    <property type="term" value="P:tRNA guanine ribose methylation"/>
    <property type="evidence" value="ECO:0007669"/>
    <property type="project" value="UniProtKB-UniRule"/>
</dbReference>
<dbReference type="CDD" id="cd18092">
    <property type="entry name" value="SpoU-like_TrmH"/>
    <property type="match status" value="1"/>
</dbReference>
<dbReference type="FunFam" id="3.40.1280.10:FF:000009">
    <property type="entry name" value="tRNA (guanosine(18)-2'-O)-methyltransferase"/>
    <property type="match status" value="1"/>
</dbReference>
<dbReference type="Gene3D" id="3.40.1280.10">
    <property type="match status" value="1"/>
</dbReference>
<dbReference type="HAMAP" id="MF_02060">
    <property type="entry name" value="tRNA_methyltr_TrmH"/>
    <property type="match status" value="1"/>
</dbReference>
<dbReference type="InterPro" id="IPR029028">
    <property type="entry name" value="Alpha/beta_knot_MTases"/>
</dbReference>
<dbReference type="InterPro" id="IPR022724">
    <property type="entry name" value="rRNA_MeTrfase_SpoU_C"/>
</dbReference>
<dbReference type="InterPro" id="IPR001537">
    <property type="entry name" value="SpoU_MeTrfase"/>
</dbReference>
<dbReference type="InterPro" id="IPR033671">
    <property type="entry name" value="TrmH"/>
</dbReference>
<dbReference type="InterPro" id="IPR029026">
    <property type="entry name" value="tRNA_m1G_MTases_N"/>
</dbReference>
<dbReference type="NCBIfam" id="NF008295">
    <property type="entry name" value="PRK11081.1"/>
    <property type="match status" value="1"/>
</dbReference>
<dbReference type="PANTHER" id="PTHR43453">
    <property type="entry name" value="RRNA METHYLASE-LIKE"/>
    <property type="match status" value="1"/>
</dbReference>
<dbReference type="PANTHER" id="PTHR43453:SF1">
    <property type="entry name" value="TRNA_RRNA METHYLTRANSFERASE SPOU TYPE DOMAIN-CONTAINING PROTEIN"/>
    <property type="match status" value="1"/>
</dbReference>
<dbReference type="Pfam" id="PF12105">
    <property type="entry name" value="SpoU_methylas_C"/>
    <property type="match status" value="1"/>
</dbReference>
<dbReference type="Pfam" id="PF00588">
    <property type="entry name" value="SpoU_methylase"/>
    <property type="match status" value="1"/>
</dbReference>
<dbReference type="SUPFAM" id="SSF75217">
    <property type="entry name" value="alpha/beta knot"/>
    <property type="match status" value="1"/>
</dbReference>
<comment type="function">
    <text evidence="1">Catalyzes the 2'-O methylation of guanosine at position 18 in tRNA.</text>
</comment>
<comment type="catalytic activity">
    <reaction evidence="1">
        <text>guanosine(18) in tRNA + S-adenosyl-L-methionine = 2'-O-methylguanosine(18) in tRNA + S-adenosyl-L-homocysteine + H(+)</text>
        <dbReference type="Rhea" id="RHEA:20077"/>
        <dbReference type="Rhea" id="RHEA-COMP:10190"/>
        <dbReference type="Rhea" id="RHEA-COMP:10192"/>
        <dbReference type="ChEBI" id="CHEBI:15378"/>
        <dbReference type="ChEBI" id="CHEBI:57856"/>
        <dbReference type="ChEBI" id="CHEBI:59789"/>
        <dbReference type="ChEBI" id="CHEBI:74269"/>
        <dbReference type="ChEBI" id="CHEBI:74445"/>
        <dbReference type="EC" id="2.1.1.34"/>
    </reaction>
</comment>
<comment type="similarity">
    <text evidence="1">Belongs to the class IV-like SAM-binding methyltransferase superfamily. RNA methyltransferase TrmH family.</text>
</comment>
<evidence type="ECO:0000255" key="1">
    <source>
        <dbReference type="HAMAP-Rule" id="MF_02060"/>
    </source>
</evidence>
<proteinExistence type="inferred from homology"/>
<reference key="1">
    <citation type="journal article" date="2002" name="Nucleic Acids Res.">
        <title>Genome sequence of Shigella flexneri 2a: insights into pathogenicity through comparison with genomes of Escherichia coli K12 and O157.</title>
        <authorList>
            <person name="Jin Q."/>
            <person name="Yuan Z."/>
            <person name="Xu J."/>
            <person name="Wang Y."/>
            <person name="Shen Y."/>
            <person name="Lu W."/>
            <person name="Wang J."/>
            <person name="Liu H."/>
            <person name="Yang J."/>
            <person name="Yang F."/>
            <person name="Zhang X."/>
            <person name="Zhang J."/>
            <person name="Yang G."/>
            <person name="Wu H."/>
            <person name="Qu D."/>
            <person name="Dong J."/>
            <person name="Sun L."/>
            <person name="Xue Y."/>
            <person name="Zhao A."/>
            <person name="Gao Y."/>
            <person name="Zhu J."/>
            <person name="Kan B."/>
            <person name="Ding K."/>
            <person name="Chen S."/>
            <person name="Cheng H."/>
            <person name="Yao Z."/>
            <person name="He B."/>
            <person name="Chen R."/>
            <person name="Ma D."/>
            <person name="Qiang B."/>
            <person name="Wen Y."/>
            <person name="Hou Y."/>
            <person name="Yu J."/>
        </authorList>
    </citation>
    <scope>NUCLEOTIDE SEQUENCE [LARGE SCALE GENOMIC DNA]</scope>
    <source>
        <strain>301 / Serotype 2a</strain>
    </source>
</reference>
<reference key="2">
    <citation type="journal article" date="2003" name="Infect. Immun.">
        <title>Complete genome sequence and comparative genomics of Shigella flexneri serotype 2a strain 2457T.</title>
        <authorList>
            <person name="Wei J."/>
            <person name="Goldberg M.B."/>
            <person name="Burland V."/>
            <person name="Venkatesan M.M."/>
            <person name="Deng W."/>
            <person name="Fournier G."/>
            <person name="Mayhew G.F."/>
            <person name="Plunkett G. III"/>
            <person name="Rose D.J."/>
            <person name="Darling A."/>
            <person name="Mau B."/>
            <person name="Perna N.T."/>
            <person name="Payne S.M."/>
            <person name="Runyen-Janecky L.J."/>
            <person name="Zhou S."/>
            <person name="Schwartz D.C."/>
            <person name="Blattner F.R."/>
        </authorList>
    </citation>
    <scope>NUCLEOTIDE SEQUENCE [LARGE SCALE GENOMIC DNA]</scope>
    <source>
        <strain>ATCC 700930 / 2457T / Serotype 2a</strain>
    </source>
</reference>
<keyword id="KW-0489">Methyltransferase</keyword>
<keyword id="KW-1185">Reference proteome</keyword>
<keyword id="KW-0694">RNA-binding</keyword>
<keyword id="KW-0949">S-adenosyl-L-methionine</keyword>
<keyword id="KW-0808">Transferase</keyword>
<keyword id="KW-0819">tRNA processing</keyword>
<keyword id="KW-0820">tRNA-binding</keyword>
<protein>
    <recommendedName>
        <fullName evidence="1">tRNA (guanosine(18)-2'-O)-methyltransferase</fullName>
        <ecNumber evidence="1">2.1.1.34</ecNumber>
    </recommendedName>
    <alternativeName>
        <fullName evidence="1">tRNA [Gm18] methyltransferase</fullName>
    </alternativeName>
</protein>
<feature type="chain" id="PRO_0000159774" description="tRNA (guanosine(18)-2'-O)-methyltransferase">
    <location>
        <begin position="1"/>
        <end position="229"/>
    </location>
</feature>
<feature type="binding site" evidence="1">
    <location>
        <position position="96"/>
    </location>
    <ligand>
        <name>S-adenosyl-L-methionine</name>
        <dbReference type="ChEBI" id="CHEBI:59789"/>
    </ligand>
</feature>
<feature type="binding site" evidence="1">
    <location>
        <position position="139"/>
    </location>
    <ligand>
        <name>S-adenosyl-L-methionine</name>
        <dbReference type="ChEBI" id="CHEBI:59789"/>
    </ligand>
</feature>
<feature type="binding site" evidence="1">
    <location>
        <position position="148"/>
    </location>
    <ligand>
        <name>S-adenosyl-L-methionine</name>
        <dbReference type="ChEBI" id="CHEBI:59789"/>
    </ligand>
</feature>
<sequence length="229" mass="25343">MNPTRYARICEMLARRQPDLTVCMEQVHKPHNVSAIIRTADAVGVHEVHAVWPGSRMRTMASAAAGSNSWVQVKTHRTIGDAVAHLKGQGMQILATHLSDNAVDFREIDYTRPTCILMGQEKTGITQEALALADQDIIIPMIGMVQSLNVSVASALILYEAQRQRQNAGMYLRENSMLPEAEQQRLLFEGGYPVLAKVAKRKGLPYPHVNQQGEIEADADWWATMQAAG</sequence>
<organism>
    <name type="scientific">Shigella flexneri</name>
    <dbReference type="NCBI Taxonomy" id="623"/>
    <lineage>
        <taxon>Bacteria</taxon>
        <taxon>Pseudomonadati</taxon>
        <taxon>Pseudomonadota</taxon>
        <taxon>Gammaproteobacteria</taxon>
        <taxon>Enterobacterales</taxon>
        <taxon>Enterobacteriaceae</taxon>
        <taxon>Shigella</taxon>
    </lineage>
</organism>
<accession>P0AGJ4</accession>
<accession>P19396</accession>
<name>TRMH_SHIFL</name>